<gene>
    <name evidence="1" type="primary">lsrK</name>
    <name type="ordered locus">YpAngola_A0855</name>
</gene>
<feature type="chain" id="PRO_0000351603" description="Autoinducer-2 kinase">
    <location>
        <begin position="1"/>
        <end position="530"/>
    </location>
</feature>
<accession>A9R072</accession>
<dbReference type="EC" id="2.7.1.189" evidence="1"/>
<dbReference type="EMBL" id="CP000901">
    <property type="protein sequence ID" value="ABX87889.1"/>
    <property type="molecule type" value="Genomic_DNA"/>
</dbReference>
<dbReference type="RefSeq" id="WP_012229133.1">
    <property type="nucleotide sequence ID" value="NC_010159.1"/>
</dbReference>
<dbReference type="SMR" id="A9R072"/>
<dbReference type="KEGG" id="ypg:YpAngola_A0855"/>
<dbReference type="PATRIC" id="fig|349746.12.peg.1806"/>
<dbReference type="GO" id="GO:0005737">
    <property type="term" value="C:cytoplasm"/>
    <property type="evidence" value="ECO:0007669"/>
    <property type="project" value="UniProtKB-SubCell"/>
</dbReference>
<dbReference type="GO" id="GO:0071518">
    <property type="term" value="F:autoinducer-2 kinase activity"/>
    <property type="evidence" value="ECO:0007669"/>
    <property type="project" value="UniProtKB-UniRule"/>
</dbReference>
<dbReference type="GO" id="GO:0005975">
    <property type="term" value="P:carbohydrate metabolic process"/>
    <property type="evidence" value="ECO:0007669"/>
    <property type="project" value="InterPro"/>
</dbReference>
<dbReference type="GO" id="GO:0009372">
    <property type="term" value="P:quorum sensing"/>
    <property type="evidence" value="ECO:0007669"/>
    <property type="project" value="InterPro"/>
</dbReference>
<dbReference type="CDD" id="cd07775">
    <property type="entry name" value="ASKHA_NBD_FGGY_AI-2K"/>
    <property type="match status" value="1"/>
</dbReference>
<dbReference type="Gene3D" id="3.30.420.40">
    <property type="match status" value="2"/>
</dbReference>
<dbReference type="HAMAP" id="MF_02053">
    <property type="entry name" value="LsrK"/>
    <property type="match status" value="1"/>
</dbReference>
<dbReference type="InterPro" id="IPR033676">
    <property type="entry name" value="AI-2_kinase"/>
</dbReference>
<dbReference type="InterPro" id="IPR043129">
    <property type="entry name" value="ATPase_NBD"/>
</dbReference>
<dbReference type="InterPro" id="IPR000577">
    <property type="entry name" value="Carb_kinase_FGGY"/>
</dbReference>
<dbReference type="InterPro" id="IPR018485">
    <property type="entry name" value="FGGY_C"/>
</dbReference>
<dbReference type="InterPro" id="IPR050406">
    <property type="entry name" value="FGGY_Carb_Kinase"/>
</dbReference>
<dbReference type="InterPro" id="IPR018484">
    <property type="entry name" value="FGGY_N"/>
</dbReference>
<dbReference type="NCBIfam" id="NF008187">
    <property type="entry name" value="PRK10939.1"/>
    <property type="match status" value="1"/>
</dbReference>
<dbReference type="PANTHER" id="PTHR43095:SF1">
    <property type="entry name" value="AUTOINDUCER-2 KINASE"/>
    <property type="match status" value="1"/>
</dbReference>
<dbReference type="PANTHER" id="PTHR43095">
    <property type="entry name" value="SUGAR KINASE"/>
    <property type="match status" value="1"/>
</dbReference>
<dbReference type="Pfam" id="PF02782">
    <property type="entry name" value="FGGY_C"/>
    <property type="match status" value="1"/>
</dbReference>
<dbReference type="Pfam" id="PF00370">
    <property type="entry name" value="FGGY_N"/>
    <property type="match status" value="1"/>
</dbReference>
<dbReference type="PIRSF" id="PIRSF000538">
    <property type="entry name" value="GlpK"/>
    <property type="match status" value="1"/>
</dbReference>
<dbReference type="SUPFAM" id="SSF53067">
    <property type="entry name" value="Actin-like ATPase domain"/>
    <property type="match status" value="2"/>
</dbReference>
<sequence>MSQLDTTTPSGDYLMALDAGTGSVRAVIFDLNGNQIAAGQAEWLHLPVPDVPGSMEFDLTTNWQLTCQCIRQALHLAKLPASAIRAVAACSMREGIVLYDRSGTPIWACANVDARASREVSELKELHNNGFELEIYQCSGQTLALSAMPRLLWLAHYRPDIYRQAGTLTMISDWLANMLSGELAVDPSNAGTTGMLDLVTRNWQPNLLEMAGLRADILSPVKETGTLLGHVTAKAAQECGLLAGTPVVMGGGDVQLGCLGLGVVHAGQTAVLGGTFWQQVVNLPQPIIDPNMNTRINPHVIPGMVQAESISFFTGLTMRWFRDAFCAEEKLLAQRLGIDTYSLLEDMAARVPAGAYGVMPIFSDVMQFKSWYHAAPSFINLSLDPEKCNKATLFRALEENAAIVSACNLAQIAEFSGVKASSVVFAGGGAKGKLWSQILADVTGVPVKVPVVKEATALGCAIAAGVGVGLYEALDKTGERLVRWEREYIPNTEHKALYQAAKTNWQAVYTDQLGLVDCGLTTSLWKAPGL</sequence>
<protein>
    <recommendedName>
        <fullName evidence="1">Autoinducer-2 kinase</fullName>
        <shortName evidence="1">AI-2 kinase</shortName>
        <ecNumber evidence="1">2.7.1.189</ecNumber>
    </recommendedName>
</protein>
<organism>
    <name type="scientific">Yersinia pestis bv. Antiqua (strain Angola)</name>
    <dbReference type="NCBI Taxonomy" id="349746"/>
    <lineage>
        <taxon>Bacteria</taxon>
        <taxon>Pseudomonadati</taxon>
        <taxon>Pseudomonadota</taxon>
        <taxon>Gammaproteobacteria</taxon>
        <taxon>Enterobacterales</taxon>
        <taxon>Yersiniaceae</taxon>
        <taxon>Yersinia</taxon>
    </lineage>
</organism>
<evidence type="ECO:0000255" key="1">
    <source>
        <dbReference type="HAMAP-Rule" id="MF_02053"/>
    </source>
</evidence>
<keyword id="KW-0963">Cytoplasm</keyword>
<keyword id="KW-0418">Kinase</keyword>
<keyword id="KW-0808">Transferase</keyword>
<proteinExistence type="inferred from homology"/>
<name>LSRK_YERPG</name>
<reference key="1">
    <citation type="journal article" date="2010" name="J. Bacteriol.">
        <title>Genome sequence of the deep-rooted Yersinia pestis strain Angola reveals new insights into the evolution and pangenome of the plague bacterium.</title>
        <authorList>
            <person name="Eppinger M."/>
            <person name="Worsham P.L."/>
            <person name="Nikolich M.P."/>
            <person name="Riley D.R."/>
            <person name="Sebastian Y."/>
            <person name="Mou S."/>
            <person name="Achtman M."/>
            <person name="Lindler L.E."/>
            <person name="Ravel J."/>
        </authorList>
    </citation>
    <scope>NUCLEOTIDE SEQUENCE [LARGE SCALE GENOMIC DNA]</scope>
    <source>
        <strain>Angola</strain>
    </source>
</reference>
<comment type="function">
    <text evidence="1">Catalyzes the phosphorylation of autoinducer-2 (AI-2) to phospho-AI-2, which subsequently inactivates the transcriptional regulator LsrR and leads to the transcription of the lsr operon. Phosphorylates the ring-open form of (S)-4,5-dihydroxypentane-2,3-dione (DPD), which is the precursor to all AI-2 signaling molecules, at the C5 position.</text>
</comment>
<comment type="catalytic activity">
    <reaction evidence="1">
        <text>(S)-4,5-dihydroxypentane-2,3-dione + ATP = (2S)-2-hydroxy-3,4-dioxopentyl phosphate + ADP + H(+)</text>
        <dbReference type="Rhea" id="RHEA:15377"/>
        <dbReference type="ChEBI" id="CHEBI:15378"/>
        <dbReference type="ChEBI" id="CHEBI:29484"/>
        <dbReference type="ChEBI" id="CHEBI:30616"/>
        <dbReference type="ChEBI" id="CHEBI:71677"/>
        <dbReference type="ChEBI" id="CHEBI:456216"/>
        <dbReference type="EC" id="2.7.1.189"/>
    </reaction>
</comment>
<comment type="subcellular location">
    <subcellularLocation>
        <location evidence="1">Cytoplasm</location>
    </subcellularLocation>
</comment>
<comment type="similarity">
    <text evidence="1">Belongs to the FGGY kinase family.</text>
</comment>